<comment type="function">
    <text evidence="1">Involved in the catabolism of L-rhamnose (6-deoxy-L-mannose). Catalyzes the transfer of the gamma-phosphate group from ATP to the 1-hydroxyl group of L-rhamnulose to yield L-rhamnulose 1-phosphate.</text>
</comment>
<comment type="catalytic activity">
    <reaction evidence="1">
        <text>L-rhamnulose + ATP = L-rhamnulose 1-phosphate + ADP + H(+)</text>
        <dbReference type="Rhea" id="RHEA:20117"/>
        <dbReference type="ChEBI" id="CHEBI:15378"/>
        <dbReference type="ChEBI" id="CHEBI:17897"/>
        <dbReference type="ChEBI" id="CHEBI:30616"/>
        <dbReference type="ChEBI" id="CHEBI:58313"/>
        <dbReference type="ChEBI" id="CHEBI:456216"/>
        <dbReference type="EC" id="2.7.1.5"/>
    </reaction>
</comment>
<comment type="cofactor">
    <cofactor evidence="1">
        <name>Mg(2+)</name>
        <dbReference type="ChEBI" id="CHEBI:18420"/>
    </cofactor>
</comment>
<comment type="pathway">
    <text evidence="1">Carbohydrate degradation; L-rhamnose degradation; glycerone phosphate from L-rhamnose: step 2/3.</text>
</comment>
<comment type="similarity">
    <text evidence="1">Belongs to the rhamnulokinase family.</text>
</comment>
<reference key="1">
    <citation type="journal article" date="2001" name="Science">
        <title>Comparative genomics of Listeria species.</title>
        <authorList>
            <person name="Glaser P."/>
            <person name="Frangeul L."/>
            <person name="Buchrieser C."/>
            <person name="Rusniok C."/>
            <person name="Amend A."/>
            <person name="Baquero F."/>
            <person name="Berche P."/>
            <person name="Bloecker H."/>
            <person name="Brandt P."/>
            <person name="Chakraborty T."/>
            <person name="Charbit A."/>
            <person name="Chetouani F."/>
            <person name="Couve E."/>
            <person name="de Daruvar A."/>
            <person name="Dehoux P."/>
            <person name="Domann E."/>
            <person name="Dominguez-Bernal G."/>
            <person name="Duchaud E."/>
            <person name="Durant L."/>
            <person name="Dussurget O."/>
            <person name="Entian K.-D."/>
            <person name="Fsihi H."/>
            <person name="Garcia-del Portillo F."/>
            <person name="Garrido P."/>
            <person name="Gautier L."/>
            <person name="Goebel W."/>
            <person name="Gomez-Lopez N."/>
            <person name="Hain T."/>
            <person name="Hauf J."/>
            <person name="Jackson D."/>
            <person name="Jones L.-M."/>
            <person name="Kaerst U."/>
            <person name="Kreft J."/>
            <person name="Kuhn M."/>
            <person name="Kunst F."/>
            <person name="Kurapkat G."/>
            <person name="Madueno E."/>
            <person name="Maitournam A."/>
            <person name="Mata Vicente J."/>
            <person name="Ng E."/>
            <person name="Nedjari H."/>
            <person name="Nordsiek G."/>
            <person name="Novella S."/>
            <person name="de Pablos B."/>
            <person name="Perez-Diaz J.-C."/>
            <person name="Purcell R."/>
            <person name="Remmel B."/>
            <person name="Rose M."/>
            <person name="Schlueter T."/>
            <person name="Simoes N."/>
            <person name="Tierrez A."/>
            <person name="Vazquez-Boland J.-A."/>
            <person name="Voss H."/>
            <person name="Wehland J."/>
            <person name="Cossart P."/>
        </authorList>
    </citation>
    <scope>NUCLEOTIDE SEQUENCE [LARGE SCALE GENOMIC DNA]</scope>
    <source>
        <strain>ATCC BAA-680 / CLIP 11262</strain>
    </source>
</reference>
<accession>Q926R0</accession>
<dbReference type="EC" id="2.7.1.5" evidence="1"/>
<dbReference type="EMBL" id="AL596174">
    <property type="protein sequence ID" value="CAC98206.1"/>
    <property type="molecule type" value="Genomic_DNA"/>
</dbReference>
<dbReference type="PIR" id="AF1804">
    <property type="entry name" value="AF1804"/>
</dbReference>
<dbReference type="RefSeq" id="WP_003772728.1">
    <property type="nucleotide sequence ID" value="NC_003212.1"/>
</dbReference>
<dbReference type="SMR" id="Q926R0"/>
<dbReference type="STRING" id="272626.gene:17567368"/>
<dbReference type="GeneID" id="93236258"/>
<dbReference type="KEGG" id="lin:lin2981"/>
<dbReference type="eggNOG" id="COG1070">
    <property type="taxonomic scope" value="Bacteria"/>
</dbReference>
<dbReference type="HOGENOM" id="CLU_039395_0_1_9"/>
<dbReference type="OrthoDB" id="9761504at2"/>
<dbReference type="UniPathway" id="UPA00541">
    <property type="reaction ID" value="UER00602"/>
</dbReference>
<dbReference type="Proteomes" id="UP000002513">
    <property type="component" value="Chromosome"/>
</dbReference>
<dbReference type="GO" id="GO:0005829">
    <property type="term" value="C:cytosol"/>
    <property type="evidence" value="ECO:0007669"/>
    <property type="project" value="TreeGrafter"/>
</dbReference>
<dbReference type="GO" id="GO:0005524">
    <property type="term" value="F:ATP binding"/>
    <property type="evidence" value="ECO:0007669"/>
    <property type="project" value="UniProtKB-KW"/>
</dbReference>
<dbReference type="GO" id="GO:0004370">
    <property type="term" value="F:glycerol kinase activity"/>
    <property type="evidence" value="ECO:0007669"/>
    <property type="project" value="TreeGrafter"/>
</dbReference>
<dbReference type="GO" id="GO:0008993">
    <property type="term" value="F:rhamnulokinase activity"/>
    <property type="evidence" value="ECO:0007669"/>
    <property type="project" value="UniProtKB-UniRule"/>
</dbReference>
<dbReference type="GO" id="GO:0006071">
    <property type="term" value="P:glycerol metabolic process"/>
    <property type="evidence" value="ECO:0007669"/>
    <property type="project" value="TreeGrafter"/>
</dbReference>
<dbReference type="GO" id="GO:0019301">
    <property type="term" value="P:rhamnose catabolic process"/>
    <property type="evidence" value="ECO:0007669"/>
    <property type="project" value="UniProtKB-UniRule"/>
</dbReference>
<dbReference type="CDD" id="cd07771">
    <property type="entry name" value="ASKHA_NBD_FGGY_RhaB-like"/>
    <property type="match status" value="1"/>
</dbReference>
<dbReference type="FunFam" id="3.30.420.40:FF:000064">
    <property type="entry name" value="Rhamnulokinase"/>
    <property type="match status" value="1"/>
</dbReference>
<dbReference type="FunFam" id="3.30.420.40:FF:000268">
    <property type="entry name" value="Rhamnulokinase"/>
    <property type="match status" value="1"/>
</dbReference>
<dbReference type="Gene3D" id="3.30.420.40">
    <property type="match status" value="2"/>
</dbReference>
<dbReference type="HAMAP" id="MF_01535">
    <property type="entry name" value="Rhamnulokinase"/>
    <property type="match status" value="1"/>
</dbReference>
<dbReference type="InterPro" id="IPR043129">
    <property type="entry name" value="ATPase_NBD"/>
</dbReference>
<dbReference type="InterPro" id="IPR018485">
    <property type="entry name" value="FGGY_C"/>
</dbReference>
<dbReference type="InterPro" id="IPR018484">
    <property type="entry name" value="FGGY_N"/>
</dbReference>
<dbReference type="InterPro" id="IPR013449">
    <property type="entry name" value="Rhamnulokinase"/>
</dbReference>
<dbReference type="NCBIfam" id="TIGR02627">
    <property type="entry name" value="rhamnulo_kin"/>
    <property type="match status" value="1"/>
</dbReference>
<dbReference type="PANTHER" id="PTHR10196:SF93">
    <property type="entry name" value="L-RHAMNULOKINASE"/>
    <property type="match status" value="1"/>
</dbReference>
<dbReference type="PANTHER" id="PTHR10196">
    <property type="entry name" value="SUGAR KINASE"/>
    <property type="match status" value="1"/>
</dbReference>
<dbReference type="Pfam" id="PF02782">
    <property type="entry name" value="FGGY_C"/>
    <property type="match status" value="1"/>
</dbReference>
<dbReference type="Pfam" id="PF00370">
    <property type="entry name" value="FGGY_N"/>
    <property type="match status" value="1"/>
</dbReference>
<dbReference type="SUPFAM" id="SSF53067">
    <property type="entry name" value="Actin-like ATPase domain"/>
    <property type="match status" value="2"/>
</dbReference>
<gene>
    <name evidence="1" type="primary">rhaB</name>
    <name type="ordered locus">lin2981</name>
</gene>
<proteinExistence type="inferred from homology"/>
<keyword id="KW-0067">ATP-binding</keyword>
<keyword id="KW-1015">Disulfide bond</keyword>
<keyword id="KW-0418">Kinase</keyword>
<keyword id="KW-0460">Magnesium</keyword>
<keyword id="KW-0547">Nucleotide-binding</keyword>
<keyword id="KW-0684">Rhamnose metabolism</keyword>
<keyword id="KW-0808">Transferase</keyword>
<sequence>MKHYVAVDIGASSGRLILGKLVNEKLQLEEIHRFKNGFTYRDGHERWEIDQLMQEIFIGLEKVKQLGISECVLGIDTWGVDYVLIGASGEKLADPISYRDKRTLNAVQNLTSEYPREYIYKKTGIQFMELNTLYQLYVEERNLLERAEKILLIPDYIGYVLTGVKVAETTNSSTTQMLNLREQLFDKDLLSHLNIDVEKFAPLTDAGTYLGKVKAEWLEEYDIPNCDVVTVATHDTASAVVGTPAEGENWAFLSSGTWSLIGMELIAPINNEAAFKENYTNEWGAYGTYRFLKNIMGLWIVQEIARMDDYKHSFAEMAEEASNYPYFKQIINVNDARFNNPENMVDEIKLYCQETGQTVPETIGELTNCVYGSLALYYALELEKMTEITGKKIEKLYIVGGGSNVAMLNQLTAKLAGIEVFAGPSEATAIGNLVVQMINQGEIESMRAGRKIIRNSFEIGEFSCGDVRFEEIKERFTKVLEFN</sequence>
<feature type="chain" id="PRO_0000090537" description="Rhamnulokinase">
    <location>
        <begin position="1"/>
        <end position="483"/>
    </location>
</feature>
<feature type="active site" description="Proton acceptor" evidence="1">
    <location>
        <position position="235"/>
    </location>
</feature>
<feature type="binding site" evidence="1">
    <location>
        <begin position="11"/>
        <end position="15"/>
    </location>
    <ligand>
        <name>ATP</name>
        <dbReference type="ChEBI" id="CHEBI:30616"/>
    </ligand>
</feature>
<feature type="binding site" evidence="1">
    <location>
        <position position="79"/>
    </location>
    <ligand>
        <name>substrate</name>
    </ligand>
</feature>
<feature type="binding site" evidence="1">
    <location>
        <begin position="234"/>
        <end position="236"/>
    </location>
    <ligand>
        <name>substrate</name>
    </ligand>
</feature>
<feature type="binding site" evidence="1">
    <location>
        <position position="257"/>
    </location>
    <ligand>
        <name>ATP</name>
        <dbReference type="ChEBI" id="CHEBI:30616"/>
    </ligand>
</feature>
<feature type="binding site" evidence="1">
    <location>
        <position position="294"/>
    </location>
    <ligand>
        <name>substrate</name>
    </ligand>
</feature>
<feature type="binding site" evidence="1">
    <location>
        <position position="302"/>
    </location>
    <ligand>
        <name>ATP</name>
        <dbReference type="ChEBI" id="CHEBI:30616"/>
    </ligand>
</feature>
<feature type="binding site" evidence="1">
    <location>
        <position position="401"/>
    </location>
    <ligand>
        <name>ATP</name>
        <dbReference type="ChEBI" id="CHEBI:30616"/>
    </ligand>
</feature>
<feature type="disulfide bond" evidence="1">
    <location>
        <begin position="352"/>
        <end position="369"/>
    </location>
</feature>
<evidence type="ECO:0000255" key="1">
    <source>
        <dbReference type="HAMAP-Rule" id="MF_01535"/>
    </source>
</evidence>
<organism>
    <name type="scientific">Listeria innocua serovar 6a (strain ATCC BAA-680 / CLIP 11262)</name>
    <dbReference type="NCBI Taxonomy" id="272626"/>
    <lineage>
        <taxon>Bacteria</taxon>
        <taxon>Bacillati</taxon>
        <taxon>Bacillota</taxon>
        <taxon>Bacilli</taxon>
        <taxon>Bacillales</taxon>
        <taxon>Listeriaceae</taxon>
        <taxon>Listeria</taxon>
    </lineage>
</organism>
<protein>
    <recommendedName>
        <fullName evidence="1">Rhamnulokinase</fullName>
        <shortName evidence="1">RhaB</shortName>
        <ecNumber evidence="1">2.7.1.5</ecNumber>
    </recommendedName>
    <alternativeName>
        <fullName evidence="1">ATP:L-rhamnulose phosphotransferase</fullName>
    </alternativeName>
    <alternativeName>
        <fullName evidence="1">L-rhamnulose 1-kinase</fullName>
    </alternativeName>
    <alternativeName>
        <fullName evidence="1">Rhamnulose kinase</fullName>
    </alternativeName>
</protein>
<name>RHAB_LISIN</name>